<dbReference type="EC" id="6.1.1.14" evidence="1"/>
<dbReference type="EMBL" id="CP000555">
    <property type="protein sequence ID" value="ABM96334.1"/>
    <property type="molecule type" value="Genomic_DNA"/>
</dbReference>
<dbReference type="RefSeq" id="WP_011830955.1">
    <property type="nucleotide sequence ID" value="NC_008825.1"/>
</dbReference>
<dbReference type="SMR" id="A2SL95"/>
<dbReference type="STRING" id="420662.Mpe_A3381"/>
<dbReference type="KEGG" id="mpt:Mpe_A3381"/>
<dbReference type="eggNOG" id="COG0752">
    <property type="taxonomic scope" value="Bacteria"/>
</dbReference>
<dbReference type="HOGENOM" id="CLU_057066_1_0_4"/>
<dbReference type="Proteomes" id="UP000000366">
    <property type="component" value="Chromosome"/>
</dbReference>
<dbReference type="GO" id="GO:0005829">
    <property type="term" value="C:cytosol"/>
    <property type="evidence" value="ECO:0007669"/>
    <property type="project" value="TreeGrafter"/>
</dbReference>
<dbReference type="GO" id="GO:0005524">
    <property type="term" value="F:ATP binding"/>
    <property type="evidence" value="ECO:0007669"/>
    <property type="project" value="UniProtKB-UniRule"/>
</dbReference>
<dbReference type="GO" id="GO:0004820">
    <property type="term" value="F:glycine-tRNA ligase activity"/>
    <property type="evidence" value="ECO:0007669"/>
    <property type="project" value="UniProtKB-UniRule"/>
</dbReference>
<dbReference type="GO" id="GO:0006426">
    <property type="term" value="P:glycyl-tRNA aminoacylation"/>
    <property type="evidence" value="ECO:0007669"/>
    <property type="project" value="UniProtKB-UniRule"/>
</dbReference>
<dbReference type="CDD" id="cd00733">
    <property type="entry name" value="GlyRS_alpha_core"/>
    <property type="match status" value="1"/>
</dbReference>
<dbReference type="FunFam" id="3.30.930.10:FF:000006">
    <property type="entry name" value="Glycine--tRNA ligase alpha subunit"/>
    <property type="match status" value="1"/>
</dbReference>
<dbReference type="Gene3D" id="3.30.930.10">
    <property type="entry name" value="Bira Bifunctional Protein, Domain 2"/>
    <property type="match status" value="1"/>
</dbReference>
<dbReference type="Gene3D" id="1.20.58.180">
    <property type="entry name" value="Class II aaRS and biotin synthetases, domain 2"/>
    <property type="match status" value="1"/>
</dbReference>
<dbReference type="HAMAP" id="MF_00254">
    <property type="entry name" value="Gly_tRNA_synth_alpha"/>
    <property type="match status" value="1"/>
</dbReference>
<dbReference type="InterPro" id="IPR045864">
    <property type="entry name" value="aa-tRNA-synth_II/BPL/LPL"/>
</dbReference>
<dbReference type="InterPro" id="IPR006194">
    <property type="entry name" value="Gly-tRNA-synth_heterodimer"/>
</dbReference>
<dbReference type="InterPro" id="IPR002310">
    <property type="entry name" value="Gly-tRNA_ligase_asu"/>
</dbReference>
<dbReference type="NCBIfam" id="TIGR00388">
    <property type="entry name" value="glyQ"/>
    <property type="match status" value="1"/>
</dbReference>
<dbReference type="NCBIfam" id="NF006827">
    <property type="entry name" value="PRK09348.1"/>
    <property type="match status" value="1"/>
</dbReference>
<dbReference type="PANTHER" id="PTHR30075:SF2">
    <property type="entry name" value="GLYCINE--TRNA LIGASE, CHLOROPLASTIC_MITOCHONDRIAL 2"/>
    <property type="match status" value="1"/>
</dbReference>
<dbReference type="PANTHER" id="PTHR30075">
    <property type="entry name" value="GLYCYL-TRNA SYNTHETASE"/>
    <property type="match status" value="1"/>
</dbReference>
<dbReference type="Pfam" id="PF02091">
    <property type="entry name" value="tRNA-synt_2e"/>
    <property type="match status" value="1"/>
</dbReference>
<dbReference type="PRINTS" id="PR01044">
    <property type="entry name" value="TRNASYNTHGA"/>
</dbReference>
<dbReference type="SUPFAM" id="SSF55681">
    <property type="entry name" value="Class II aaRS and biotin synthetases"/>
    <property type="match status" value="1"/>
</dbReference>
<dbReference type="PROSITE" id="PS50861">
    <property type="entry name" value="AA_TRNA_LIGASE_II_GLYAB"/>
    <property type="match status" value="1"/>
</dbReference>
<proteinExistence type="inferred from homology"/>
<feature type="chain" id="PRO_1000047447" description="Glycine--tRNA ligase alpha subunit">
    <location>
        <begin position="1"/>
        <end position="318"/>
    </location>
</feature>
<protein>
    <recommendedName>
        <fullName evidence="1">Glycine--tRNA ligase alpha subunit</fullName>
        <ecNumber evidence="1">6.1.1.14</ecNumber>
    </recommendedName>
    <alternativeName>
        <fullName evidence="1">Glycyl-tRNA synthetase alpha subunit</fullName>
        <shortName evidence="1">GlyRS</shortName>
    </alternativeName>
</protein>
<keyword id="KW-0030">Aminoacyl-tRNA synthetase</keyword>
<keyword id="KW-0067">ATP-binding</keyword>
<keyword id="KW-0963">Cytoplasm</keyword>
<keyword id="KW-0436">Ligase</keyword>
<keyword id="KW-0547">Nucleotide-binding</keyword>
<keyword id="KW-0648">Protein biosynthesis</keyword>
<keyword id="KW-1185">Reference proteome</keyword>
<accession>A2SL95</accession>
<comment type="catalytic activity">
    <reaction evidence="1">
        <text>tRNA(Gly) + glycine + ATP = glycyl-tRNA(Gly) + AMP + diphosphate</text>
        <dbReference type="Rhea" id="RHEA:16013"/>
        <dbReference type="Rhea" id="RHEA-COMP:9664"/>
        <dbReference type="Rhea" id="RHEA-COMP:9683"/>
        <dbReference type="ChEBI" id="CHEBI:30616"/>
        <dbReference type="ChEBI" id="CHEBI:33019"/>
        <dbReference type="ChEBI" id="CHEBI:57305"/>
        <dbReference type="ChEBI" id="CHEBI:78442"/>
        <dbReference type="ChEBI" id="CHEBI:78522"/>
        <dbReference type="ChEBI" id="CHEBI:456215"/>
        <dbReference type="EC" id="6.1.1.14"/>
    </reaction>
</comment>
<comment type="subunit">
    <text evidence="1">Tetramer of two alpha and two beta subunits.</text>
</comment>
<comment type="subcellular location">
    <subcellularLocation>
        <location evidence="1">Cytoplasm</location>
    </subcellularLocation>
</comment>
<comment type="similarity">
    <text evidence="1">Belongs to the class-II aminoacyl-tRNA synthetase family.</text>
</comment>
<organism>
    <name type="scientific">Methylibium petroleiphilum (strain ATCC BAA-1232 / LMG 22953 / PM1)</name>
    <dbReference type="NCBI Taxonomy" id="420662"/>
    <lineage>
        <taxon>Bacteria</taxon>
        <taxon>Pseudomonadati</taxon>
        <taxon>Pseudomonadota</taxon>
        <taxon>Betaproteobacteria</taxon>
        <taxon>Burkholderiales</taxon>
        <taxon>Sphaerotilaceae</taxon>
        <taxon>Methylibium</taxon>
    </lineage>
</organism>
<sequence length="318" mass="35854">MLSFQQIILRLQQYWADQGCALLQPYDMEVGAGTSHTATFLRALGPEPWKAAYVQPSRRPKDGRYGENPNRLQHYYQYQVVLKPAPSNILELYLGSLEALGFDLKANDIRFVEDDWENPTLGAWGLGWEVWLNGMEVTQFTYFQQVGGIDCRPITGEITYGLERLAMYLQGVDNVYKLQWTEGLSYGDVYLQNEQEQSAYNFEHSNVDFLLTAFGAHEGNAQQLMTQQLALPAYEQVLKAAHTFNLLDARGAISVTERAAYIGRIRNLARAVAQSYVDSRARLGYPMAPREWVAEIEKAGEAARKPAKVANAEEAARA</sequence>
<reference key="1">
    <citation type="journal article" date="2007" name="J. Bacteriol.">
        <title>Whole-genome analysis of the methyl tert-butyl ether-degrading beta-proteobacterium Methylibium petroleiphilum PM1.</title>
        <authorList>
            <person name="Kane S.R."/>
            <person name="Chakicherla A.Y."/>
            <person name="Chain P.S.G."/>
            <person name="Schmidt R."/>
            <person name="Shin M.W."/>
            <person name="Legler T.C."/>
            <person name="Scow K.M."/>
            <person name="Larimer F.W."/>
            <person name="Lucas S.M."/>
            <person name="Richardson P.M."/>
            <person name="Hristova K.R."/>
        </authorList>
    </citation>
    <scope>NUCLEOTIDE SEQUENCE [LARGE SCALE GENOMIC DNA]</scope>
    <source>
        <strain>ATCC BAA-1232 / LMG 22953 / PM1</strain>
    </source>
</reference>
<evidence type="ECO:0000255" key="1">
    <source>
        <dbReference type="HAMAP-Rule" id="MF_00254"/>
    </source>
</evidence>
<name>SYGA_METPP</name>
<gene>
    <name evidence="1" type="primary">glyQ</name>
    <name type="ordered locus">Mpe_A3381</name>
</gene>